<reference key="1">
    <citation type="journal article" date="1995" name="J. Steroid Biochem. Mol. Biol.">
        <title>Cloning, expression and functional characterization of type 1 and type 2 steroid 5 alpha-reductases from Cynomolgus monkey: comparisons with human and rat isoenzymes.</title>
        <authorList>
            <person name="Levy M.A."/>
            <person name="Brandt M."/>
            <person name="Sheedy K.M."/>
            <person name="Holt D.A."/>
            <person name="Heaslip J.I."/>
            <person name="Trill J.J."/>
            <person name="Ryan P.J."/>
            <person name="Morris R.A."/>
            <person name="Garrison L.M."/>
            <person name="Bergsma D.J."/>
        </authorList>
    </citation>
    <scope>NUCLEOTIDE SEQUENCE [MRNA]</scope>
    <source>
        <tissue>Prostate</tissue>
    </source>
</reference>
<keyword id="KW-0221">Differentiation</keyword>
<keyword id="KW-0256">Endoplasmic reticulum</keyword>
<keyword id="KW-0443">Lipid metabolism</keyword>
<keyword id="KW-0472">Membrane</keyword>
<keyword id="KW-0492">Microsome</keyword>
<keyword id="KW-0521">NADP</keyword>
<keyword id="KW-0560">Oxidoreductase</keyword>
<keyword id="KW-1185">Reference proteome</keyword>
<keyword id="KW-0726">Sexual differentiation</keyword>
<keyword id="KW-0812">Transmembrane</keyword>
<keyword id="KW-1133">Transmembrane helix</keyword>
<protein>
    <recommendedName>
        <fullName>3-oxo-5-alpha-steroid 4-dehydrogenase 2</fullName>
        <ecNumber evidence="1">1.3.1.22</ecNumber>
    </recommendedName>
    <alternativeName>
        <fullName>5 alpha-SR2</fullName>
    </alternativeName>
    <alternativeName>
        <fullName>SR type 2</fullName>
    </alternativeName>
    <alternativeName>
        <fullName>Steroid 5-alpha-reductase 2</fullName>
        <shortName>S5AR 2</shortName>
    </alternativeName>
</protein>
<accession>Q28892</accession>
<name>S5A2_MACFA</name>
<dbReference type="EC" id="1.3.1.22" evidence="1"/>
<dbReference type="EMBL" id="S77165">
    <property type="protein sequence ID" value="AAB34213.1"/>
    <property type="molecule type" value="mRNA"/>
</dbReference>
<dbReference type="RefSeq" id="NP_001270396.1">
    <property type="nucleotide sequence ID" value="NM_001283467.1"/>
</dbReference>
<dbReference type="SMR" id="Q28892"/>
<dbReference type="STRING" id="9541.ENSMFAP00000009161"/>
<dbReference type="eggNOG" id="KOG1638">
    <property type="taxonomic scope" value="Eukaryota"/>
</dbReference>
<dbReference type="Proteomes" id="UP000233100">
    <property type="component" value="Unplaced"/>
</dbReference>
<dbReference type="GO" id="GO:0005789">
    <property type="term" value="C:endoplasmic reticulum membrane"/>
    <property type="evidence" value="ECO:0007669"/>
    <property type="project" value="UniProtKB-SubCell"/>
</dbReference>
<dbReference type="GO" id="GO:0047751">
    <property type="term" value="F:3-oxo-5-alpha-steroid 4-dehydrogenase (NADP+) activity"/>
    <property type="evidence" value="ECO:0007669"/>
    <property type="project" value="UniProtKB-EC"/>
</dbReference>
<dbReference type="GO" id="GO:0030283">
    <property type="term" value="F:testosterone dehydrogenase [NAD(P)+] activity"/>
    <property type="evidence" value="ECO:0000250"/>
    <property type="project" value="UniProtKB"/>
</dbReference>
<dbReference type="GO" id="GO:0006702">
    <property type="term" value="P:androgen biosynthetic process"/>
    <property type="evidence" value="ECO:0007669"/>
    <property type="project" value="UniProtKB-ARBA"/>
</dbReference>
<dbReference type="GO" id="GO:0030154">
    <property type="term" value="P:cell differentiation"/>
    <property type="evidence" value="ECO:0007669"/>
    <property type="project" value="UniProtKB-KW"/>
</dbReference>
<dbReference type="GO" id="GO:0007548">
    <property type="term" value="P:sex differentiation"/>
    <property type="evidence" value="ECO:0007669"/>
    <property type="project" value="UniProtKB-KW"/>
</dbReference>
<dbReference type="GO" id="GO:0061370">
    <property type="term" value="P:testosterone biosynthetic process"/>
    <property type="evidence" value="ECO:0000250"/>
    <property type="project" value="UniProtKB"/>
</dbReference>
<dbReference type="FunFam" id="1.20.120.1630:FF:000002">
    <property type="entry name" value="Steroid 5 alpha-reductase 1"/>
    <property type="match status" value="1"/>
</dbReference>
<dbReference type="Gene3D" id="1.20.120.1630">
    <property type="match status" value="1"/>
</dbReference>
<dbReference type="InterPro" id="IPR016636">
    <property type="entry name" value="3-oxo-5-alpha-steroid_4-DH"/>
</dbReference>
<dbReference type="InterPro" id="IPR001104">
    <property type="entry name" value="3-oxo-5_a-steroid_4-DH_C"/>
</dbReference>
<dbReference type="InterPro" id="IPR039357">
    <property type="entry name" value="SRD5A/TECR"/>
</dbReference>
<dbReference type="PANTHER" id="PTHR10556">
    <property type="entry name" value="3-OXO-5-ALPHA-STEROID 4-DEHYDROGENASE"/>
    <property type="match status" value="1"/>
</dbReference>
<dbReference type="PANTHER" id="PTHR10556:SF37">
    <property type="entry name" value="3-OXO-5-ALPHA-STEROID 4-DEHYDROGENASE 2"/>
    <property type="match status" value="1"/>
</dbReference>
<dbReference type="Pfam" id="PF02544">
    <property type="entry name" value="Steroid_dh"/>
    <property type="match status" value="1"/>
</dbReference>
<dbReference type="PIRSF" id="PIRSF015596">
    <property type="entry name" value="5_alpha-SR2"/>
    <property type="match status" value="1"/>
</dbReference>
<dbReference type="PROSITE" id="PS50244">
    <property type="entry name" value="S5A_REDUCTASE"/>
    <property type="match status" value="1"/>
</dbReference>
<feature type="chain" id="PRO_0000213677" description="3-oxo-5-alpha-steroid 4-dehydrogenase 2">
    <location>
        <begin position="1"/>
        <end position="254"/>
    </location>
</feature>
<feature type="transmembrane region" description="Helical" evidence="2">
    <location>
        <begin position="8"/>
        <end position="28"/>
    </location>
</feature>
<feature type="transmembrane region" description="Helical" evidence="2">
    <location>
        <begin position="72"/>
        <end position="92"/>
    </location>
</feature>
<feature type="transmembrane region" description="Helical" evidence="2">
    <location>
        <begin position="146"/>
        <end position="166"/>
    </location>
</feature>
<feature type="transmembrane region" description="Helical" evidence="2">
    <location>
        <begin position="206"/>
        <end position="226"/>
    </location>
</feature>
<proteinExistence type="evidence at protein level"/>
<organism>
    <name type="scientific">Macaca fascicularis</name>
    <name type="common">Crab-eating macaque</name>
    <name type="synonym">Cynomolgus monkey</name>
    <dbReference type="NCBI Taxonomy" id="9541"/>
    <lineage>
        <taxon>Eukaryota</taxon>
        <taxon>Metazoa</taxon>
        <taxon>Chordata</taxon>
        <taxon>Craniata</taxon>
        <taxon>Vertebrata</taxon>
        <taxon>Euteleostomi</taxon>
        <taxon>Mammalia</taxon>
        <taxon>Eutheria</taxon>
        <taxon>Euarchontoglires</taxon>
        <taxon>Primates</taxon>
        <taxon>Haplorrhini</taxon>
        <taxon>Catarrhini</taxon>
        <taxon>Cercopithecidae</taxon>
        <taxon>Cercopithecinae</taxon>
        <taxon>Macaca</taxon>
    </lineage>
</organism>
<evidence type="ECO:0000250" key="1">
    <source>
        <dbReference type="UniProtKB" id="P31213"/>
    </source>
</evidence>
<evidence type="ECO:0000255" key="2"/>
<evidence type="ECO:0000305" key="3"/>
<gene>
    <name type="primary">SRD5A2</name>
</gene>
<sequence>MQVQCQQSPVLAGSATLVALGALVLYVAKPSGYGKHTESLKPAATRLPARAAWFLQELPSFAVPAGILARQPLSLFGPPGTVLLGLFCVHYFHRTFVYSLLNRGRPYPAVLIFRGIAFCAGNGFLQSYYLIYCAEYPDGWYTDIRFCLGVFLFILGMGVNIHSDYILRQLRKPGEITYRIPKGGLFTYVSGANFLGEIIEWIGYALATWSLPALAFAFFSVCFLGLRAFHHHRFYLKMFEDYPKSRKALIPFIF</sequence>
<comment type="function">
    <text evidence="1">Converts testosterone (T) into 5-alpha-dihydrotestosterone (DHT) and progesterone or corticosterone into their corresponding 5-alpha-3-oxosteroids. It plays a central role in sexual differentiation and androgen physiology.</text>
</comment>
<comment type="catalytic activity">
    <reaction evidence="1">
        <text>a 3-oxo-5alpha-steroid + NADP(+) = a 3-oxo-Delta(4)-steroid + NADPH + H(+)</text>
        <dbReference type="Rhea" id="RHEA:54384"/>
        <dbReference type="ChEBI" id="CHEBI:13601"/>
        <dbReference type="ChEBI" id="CHEBI:15378"/>
        <dbReference type="ChEBI" id="CHEBI:47909"/>
        <dbReference type="ChEBI" id="CHEBI:57783"/>
        <dbReference type="ChEBI" id="CHEBI:58349"/>
        <dbReference type="EC" id="1.3.1.22"/>
    </reaction>
</comment>
<comment type="catalytic activity">
    <reaction evidence="1">
        <text>17beta-hydroxy-5alpha-androstan-3-one + NADP(+) = testosterone + NADPH + H(+)</text>
        <dbReference type="Rhea" id="RHEA:50820"/>
        <dbReference type="ChEBI" id="CHEBI:15378"/>
        <dbReference type="ChEBI" id="CHEBI:16330"/>
        <dbReference type="ChEBI" id="CHEBI:17347"/>
        <dbReference type="ChEBI" id="CHEBI:57783"/>
        <dbReference type="ChEBI" id="CHEBI:58349"/>
        <dbReference type="EC" id="1.3.1.22"/>
    </reaction>
    <physiologicalReaction direction="right-to-left" evidence="1">
        <dbReference type="Rhea" id="RHEA:50822"/>
    </physiologicalReaction>
</comment>
<comment type="catalytic activity">
    <reaction evidence="1">
        <text>5alpha-pregnane-3,20-dione + NADP(+) = progesterone + NADPH + H(+)</text>
        <dbReference type="Rhea" id="RHEA:21952"/>
        <dbReference type="ChEBI" id="CHEBI:15378"/>
        <dbReference type="ChEBI" id="CHEBI:17026"/>
        <dbReference type="ChEBI" id="CHEBI:28952"/>
        <dbReference type="ChEBI" id="CHEBI:57783"/>
        <dbReference type="ChEBI" id="CHEBI:58349"/>
        <dbReference type="EC" id="1.3.1.22"/>
    </reaction>
    <physiologicalReaction direction="right-to-left" evidence="1">
        <dbReference type="Rhea" id="RHEA:21954"/>
    </physiologicalReaction>
</comment>
<comment type="biophysicochemical properties">
    <phDependence>
        <text>Optimally active at acidic pHs.</text>
    </phDependence>
</comment>
<comment type="subcellular location">
    <subcellularLocation>
        <location>Microsome membrane</location>
        <topology>Multi-pass membrane protein</topology>
    </subcellularLocation>
    <subcellularLocation>
        <location evidence="3">Endoplasmic reticulum membrane</location>
        <topology evidence="3">Multi-pass membrane protein</topology>
    </subcellularLocation>
</comment>
<comment type="similarity">
    <text evidence="3">Belongs to the steroid 5-alpha reductase family.</text>
</comment>